<comment type="similarity">
    <text evidence="1">Belongs to the bacterial ribosomal protein bL33 family.</text>
</comment>
<gene>
    <name evidence="1" type="primary">rpmG</name>
    <name type="ordered locus">SFV_3893</name>
</gene>
<evidence type="ECO:0000255" key="1">
    <source>
        <dbReference type="HAMAP-Rule" id="MF_00294"/>
    </source>
</evidence>
<evidence type="ECO:0000305" key="2"/>
<protein>
    <recommendedName>
        <fullName evidence="1">Large ribosomal subunit protein bL33</fullName>
    </recommendedName>
    <alternativeName>
        <fullName evidence="2">50S ribosomal protein L33</fullName>
    </alternativeName>
</protein>
<proteinExistence type="inferred from homology"/>
<keyword id="KW-0687">Ribonucleoprotein</keyword>
<keyword id="KW-0689">Ribosomal protein</keyword>
<reference key="1">
    <citation type="journal article" date="2006" name="BMC Genomics">
        <title>Complete genome sequence of Shigella flexneri 5b and comparison with Shigella flexneri 2a.</title>
        <authorList>
            <person name="Nie H."/>
            <person name="Yang F."/>
            <person name="Zhang X."/>
            <person name="Yang J."/>
            <person name="Chen L."/>
            <person name="Wang J."/>
            <person name="Xiong Z."/>
            <person name="Peng J."/>
            <person name="Sun L."/>
            <person name="Dong J."/>
            <person name="Xue Y."/>
            <person name="Xu X."/>
            <person name="Chen S."/>
            <person name="Yao Z."/>
            <person name="Shen Y."/>
            <person name="Jin Q."/>
        </authorList>
    </citation>
    <scope>NUCLEOTIDE SEQUENCE [LARGE SCALE GENOMIC DNA]</scope>
    <source>
        <strain>8401</strain>
    </source>
</reference>
<organism>
    <name type="scientific">Shigella flexneri serotype 5b (strain 8401)</name>
    <dbReference type="NCBI Taxonomy" id="373384"/>
    <lineage>
        <taxon>Bacteria</taxon>
        <taxon>Pseudomonadati</taxon>
        <taxon>Pseudomonadota</taxon>
        <taxon>Gammaproteobacteria</taxon>
        <taxon>Enterobacterales</taxon>
        <taxon>Enterobacteriaceae</taxon>
        <taxon>Shigella</taxon>
    </lineage>
</organism>
<dbReference type="EMBL" id="CP000266">
    <property type="protein sequence ID" value="ABF05901.1"/>
    <property type="molecule type" value="Genomic_DNA"/>
</dbReference>
<dbReference type="RefSeq" id="WP_001051798.1">
    <property type="nucleotide sequence ID" value="NC_008258.1"/>
</dbReference>
<dbReference type="SMR" id="Q0SYG4"/>
<dbReference type="GeneID" id="97607673"/>
<dbReference type="KEGG" id="sfv:SFV_3893"/>
<dbReference type="HOGENOM" id="CLU_190949_1_1_6"/>
<dbReference type="Proteomes" id="UP000000659">
    <property type="component" value="Chromosome"/>
</dbReference>
<dbReference type="GO" id="GO:0022625">
    <property type="term" value="C:cytosolic large ribosomal subunit"/>
    <property type="evidence" value="ECO:0007669"/>
    <property type="project" value="TreeGrafter"/>
</dbReference>
<dbReference type="GO" id="GO:0003735">
    <property type="term" value="F:structural constituent of ribosome"/>
    <property type="evidence" value="ECO:0007669"/>
    <property type="project" value="InterPro"/>
</dbReference>
<dbReference type="GO" id="GO:0006412">
    <property type="term" value="P:translation"/>
    <property type="evidence" value="ECO:0007669"/>
    <property type="project" value="UniProtKB-UniRule"/>
</dbReference>
<dbReference type="FunFam" id="2.20.28.120:FF:000001">
    <property type="entry name" value="50S ribosomal protein L33"/>
    <property type="match status" value="1"/>
</dbReference>
<dbReference type="Gene3D" id="2.20.28.120">
    <property type="entry name" value="Ribosomal protein L33"/>
    <property type="match status" value="1"/>
</dbReference>
<dbReference type="HAMAP" id="MF_00294">
    <property type="entry name" value="Ribosomal_bL33"/>
    <property type="match status" value="1"/>
</dbReference>
<dbReference type="InterPro" id="IPR001705">
    <property type="entry name" value="Ribosomal_bL33"/>
</dbReference>
<dbReference type="InterPro" id="IPR018264">
    <property type="entry name" value="Ribosomal_bL33_CS"/>
</dbReference>
<dbReference type="InterPro" id="IPR038584">
    <property type="entry name" value="Ribosomal_bL33_sf"/>
</dbReference>
<dbReference type="InterPro" id="IPR011332">
    <property type="entry name" value="Ribosomal_zn-bd"/>
</dbReference>
<dbReference type="NCBIfam" id="NF001860">
    <property type="entry name" value="PRK00595.1"/>
    <property type="match status" value="1"/>
</dbReference>
<dbReference type="NCBIfam" id="TIGR01023">
    <property type="entry name" value="rpmG_bact"/>
    <property type="match status" value="1"/>
</dbReference>
<dbReference type="PANTHER" id="PTHR15238">
    <property type="entry name" value="54S RIBOSOMAL PROTEIN L39, MITOCHONDRIAL"/>
    <property type="match status" value="1"/>
</dbReference>
<dbReference type="PANTHER" id="PTHR15238:SF1">
    <property type="entry name" value="LARGE RIBOSOMAL SUBUNIT PROTEIN BL33M"/>
    <property type="match status" value="1"/>
</dbReference>
<dbReference type="Pfam" id="PF00471">
    <property type="entry name" value="Ribosomal_L33"/>
    <property type="match status" value="1"/>
</dbReference>
<dbReference type="SUPFAM" id="SSF57829">
    <property type="entry name" value="Zn-binding ribosomal proteins"/>
    <property type="match status" value="1"/>
</dbReference>
<dbReference type="PROSITE" id="PS00582">
    <property type="entry name" value="RIBOSOMAL_L33"/>
    <property type="match status" value="1"/>
</dbReference>
<name>RL33_SHIF8</name>
<sequence length="55" mass="6372">MAKGIREKIKLVSSAGTGHFYTTTKNKRTKPEKLELKKFDPVVRQHVIYKEAKIK</sequence>
<accession>Q0SYG4</accession>
<feature type="chain" id="PRO_1000004194" description="Large ribosomal subunit protein bL33">
    <location>
        <begin position="1"/>
        <end position="55"/>
    </location>
</feature>